<gene>
    <name evidence="1" type="primary">ureA</name>
</gene>
<keyword id="KW-0963">Cytoplasm</keyword>
<keyword id="KW-0378">Hydrolase</keyword>
<protein>
    <recommendedName>
        <fullName evidence="1">Urease subunit gamma</fullName>
        <ecNumber evidence="1">3.5.1.5</ecNumber>
    </recommendedName>
    <alternativeName>
        <fullName evidence="1">Urea amidohydrolase subunit gamma</fullName>
    </alternativeName>
</protein>
<feature type="chain" id="PRO_0000098065" description="Urease subunit gamma">
    <location>
        <begin position="1"/>
        <end position="100"/>
    </location>
</feature>
<proteinExistence type="inferred from homology"/>
<organism>
    <name type="scientific">Yersinia mollaretii</name>
    <dbReference type="NCBI Taxonomy" id="33060"/>
    <lineage>
        <taxon>Bacteria</taxon>
        <taxon>Pseudomonadati</taxon>
        <taxon>Pseudomonadota</taxon>
        <taxon>Gammaproteobacteria</taxon>
        <taxon>Enterobacterales</taxon>
        <taxon>Yersiniaceae</taxon>
        <taxon>Yersinia</taxon>
    </lineage>
</organism>
<sequence>MQLTPREVEKLMIYTLSDVAFKRKARGLKLNYPEAVSIITVTAMEGARDGKSVEDVMKEASKVLTKDDVMDGVADLIPNVQVEAIFTDGSRLVTVHDPIK</sequence>
<dbReference type="EC" id="3.5.1.5" evidence="1"/>
<dbReference type="EMBL" id="AY363685">
    <property type="protein sequence ID" value="AAR15126.1"/>
    <property type="molecule type" value="Genomic_DNA"/>
</dbReference>
<dbReference type="RefSeq" id="WP_002215288.1">
    <property type="nucleotide sequence ID" value="NZ_PGLU01000009.1"/>
</dbReference>
<dbReference type="SMR" id="Q6UR44"/>
<dbReference type="STRING" id="33060.ERS008532_03265"/>
<dbReference type="OrthoDB" id="9797217at2"/>
<dbReference type="UniPathway" id="UPA00258">
    <property type="reaction ID" value="UER00370"/>
</dbReference>
<dbReference type="GO" id="GO:0005737">
    <property type="term" value="C:cytoplasm"/>
    <property type="evidence" value="ECO:0007669"/>
    <property type="project" value="UniProtKB-SubCell"/>
</dbReference>
<dbReference type="GO" id="GO:0016151">
    <property type="term" value="F:nickel cation binding"/>
    <property type="evidence" value="ECO:0007669"/>
    <property type="project" value="InterPro"/>
</dbReference>
<dbReference type="GO" id="GO:0009039">
    <property type="term" value="F:urease activity"/>
    <property type="evidence" value="ECO:0007669"/>
    <property type="project" value="UniProtKB-UniRule"/>
</dbReference>
<dbReference type="GO" id="GO:0043419">
    <property type="term" value="P:urea catabolic process"/>
    <property type="evidence" value="ECO:0007669"/>
    <property type="project" value="UniProtKB-UniRule"/>
</dbReference>
<dbReference type="CDD" id="cd00390">
    <property type="entry name" value="Urease_gamma"/>
    <property type="match status" value="1"/>
</dbReference>
<dbReference type="Gene3D" id="3.30.280.10">
    <property type="entry name" value="Urease, gamma-like subunit"/>
    <property type="match status" value="1"/>
</dbReference>
<dbReference type="HAMAP" id="MF_00739">
    <property type="entry name" value="Urease_gamma"/>
    <property type="match status" value="1"/>
</dbReference>
<dbReference type="InterPro" id="IPR012010">
    <property type="entry name" value="Urease_gamma"/>
</dbReference>
<dbReference type="InterPro" id="IPR002026">
    <property type="entry name" value="Urease_gamma/gamma-beta_su"/>
</dbReference>
<dbReference type="InterPro" id="IPR036463">
    <property type="entry name" value="Urease_gamma_sf"/>
</dbReference>
<dbReference type="InterPro" id="IPR050069">
    <property type="entry name" value="Urease_subunit"/>
</dbReference>
<dbReference type="NCBIfam" id="NF009712">
    <property type="entry name" value="PRK13241.1"/>
    <property type="match status" value="1"/>
</dbReference>
<dbReference type="NCBIfam" id="TIGR00193">
    <property type="entry name" value="urease_gam"/>
    <property type="match status" value="1"/>
</dbReference>
<dbReference type="PANTHER" id="PTHR33569">
    <property type="entry name" value="UREASE"/>
    <property type="match status" value="1"/>
</dbReference>
<dbReference type="PANTHER" id="PTHR33569:SF1">
    <property type="entry name" value="UREASE"/>
    <property type="match status" value="1"/>
</dbReference>
<dbReference type="Pfam" id="PF00547">
    <property type="entry name" value="Urease_gamma"/>
    <property type="match status" value="1"/>
</dbReference>
<dbReference type="PIRSF" id="PIRSF001223">
    <property type="entry name" value="Urease_gamma"/>
    <property type="match status" value="1"/>
</dbReference>
<dbReference type="SUPFAM" id="SSF54111">
    <property type="entry name" value="Urease, gamma-subunit"/>
    <property type="match status" value="1"/>
</dbReference>
<accession>Q6UR44</accession>
<reference key="1">
    <citation type="submission" date="2003-08" db="EMBL/GenBank/DDBJ databases">
        <title>Yersinia mollaretii urease gene locus (ureABCEFGD), and urea transporter gene (yut) and nickel transporter gene (ureH).</title>
        <authorList>
            <person name="Sebbane F."/>
            <person name="Lemaitre N."/>
            <person name="Simonet M."/>
        </authorList>
    </citation>
    <scope>NUCLEOTIDE SEQUENCE [GENOMIC DNA]</scope>
</reference>
<name>URE3_YERMO</name>
<evidence type="ECO:0000255" key="1">
    <source>
        <dbReference type="HAMAP-Rule" id="MF_00739"/>
    </source>
</evidence>
<comment type="catalytic activity">
    <reaction evidence="1">
        <text>urea + 2 H2O + H(+) = hydrogencarbonate + 2 NH4(+)</text>
        <dbReference type="Rhea" id="RHEA:20557"/>
        <dbReference type="ChEBI" id="CHEBI:15377"/>
        <dbReference type="ChEBI" id="CHEBI:15378"/>
        <dbReference type="ChEBI" id="CHEBI:16199"/>
        <dbReference type="ChEBI" id="CHEBI:17544"/>
        <dbReference type="ChEBI" id="CHEBI:28938"/>
        <dbReference type="EC" id="3.5.1.5"/>
    </reaction>
</comment>
<comment type="pathway">
    <text evidence="1">Nitrogen metabolism; urea degradation; CO(2) and NH(3) from urea (urease route): step 1/1.</text>
</comment>
<comment type="subunit">
    <text evidence="1">Heterotrimer of UreA (gamma), UreB (beta) and UreC (alpha) subunits. Three heterotrimers associate to form the active enzyme.</text>
</comment>
<comment type="subcellular location">
    <subcellularLocation>
        <location evidence="1">Cytoplasm</location>
    </subcellularLocation>
</comment>
<comment type="similarity">
    <text evidence="1">Belongs to the urease gamma subunit family.</text>
</comment>